<sequence length="689" mass="78710">MAQVEKRGGLLRKSSASKKPLKEKVVLMYDEIFMTEDPSKCSPRFWEELFLMKVNLEYLEGKLESLDGEELMKIKDNINCLFQHCIQALGEEHPIRVVNALQTLCALIRGVHQKNKSTSGFDIINMLMGFDKAELCMKNLMESLDSLLCAEGSESLKSLCLKLLLCLVTVTDNISQNTILEYVMINSIFEAILQILSHPPSRREHGYDAVVLLALLVNYRKYESVNPYIVKLSIVDDEATLNGMGLVIAQALSEYNRQYKDKEEEHQSGFFSALTNMVGSMFIADAHEKISVQTNEAILLALYEAVHLNRNFITVLAQSHPEMGLVTTPVSPAPTTPVTPLGTTPPSSDVISSVELPLDADVQTSNLLITFLKYSSIVMQDTKDEHRLHSGKLCLIILTCIAEDQYANAFLHDDNMNFRVNLHRMPMRHRKKAADKNLPCRPLVCAVLDLMVEFIVTHMMKEFPMDLYIRCIQVVHKLLCYQKKCRVRLHYTWRELWSALINLLKFLMSNETVLLAKHNIFTLALMIVNLFNMFITYGDTFLPTPSSYDELYYEIIRMHQSFDNLYSMVLRLSTNAGQWKEAASKVTHALVNIRAIINHFNPKIESYAAVNHISQLSEEQVLEVVRANYDTLTLKLQDGLDQYERYSEQHKEAAFFKELVRSISTNVRRNLAFHTLSQEVLLKEFSTIS</sequence>
<keyword id="KW-0025">Alternative splicing</keyword>
<keyword id="KW-0963">Cytoplasm</keyword>
<keyword id="KW-0333">Golgi apparatus</keyword>
<keyword id="KW-0472">Membrane</keyword>
<keyword id="KW-1267">Proteomics identification</keyword>
<keyword id="KW-1185">Reference proteome</keyword>
<keyword id="KW-0812">Transmembrane</keyword>
<keyword id="KW-1133">Transmembrane helix</keyword>
<comment type="function">
    <text evidence="3">Involved in GBF1 recruitment, Golgi maintenance and protein secretion.</text>
</comment>
<comment type="subunit">
    <text evidence="2 3">Interacts with PI4KB (PubMed:23572552). Interacts with GBF1 (PubMed:31519766).</text>
</comment>
<comment type="subcellular location">
    <subcellularLocation>
        <location evidence="3">Golgi apparatus membrane</location>
        <topology evidence="1">Single-pass membrane protein</topology>
    </subcellularLocation>
    <subcellularLocation>
        <location evidence="3">Cytoplasm</location>
    </subcellularLocation>
    <text evidence="3">The majority of ARMD3 is cytosolic, with a portion colocalizing with GBF1 at juxtanuclear Golgi sites.</text>
</comment>
<comment type="alternative products">
    <event type="alternative splicing"/>
    <isoform>
        <id>Q5T2E6-1</id>
        <name>1</name>
        <sequence type="displayed"/>
    </isoform>
    <isoform>
        <id>Q5T2E6-2</id>
        <name>2</name>
        <sequence type="described" ref="VSP_024552"/>
    </isoform>
    <isoform>
        <id>Q5T2E6-3</id>
        <name>3</name>
        <sequence type="described" ref="VSP_024552 VSP_024553 VSP_024554"/>
    </isoform>
</comment>
<comment type="miscellaneous">
    <molecule>Isoform 3</molecule>
    <text evidence="6">May be produced at very low levels due to a premature stop codon in the mRNA, leading to nonsense-mediated mRNA decay.</text>
</comment>
<comment type="similarity">
    <text evidence="6">Belongs to the ARMH3 family.</text>
</comment>
<name>ARMD3_HUMAN</name>
<protein>
    <recommendedName>
        <fullName evidence="6">Armadillo-like helical domain-containing protein 3</fullName>
    </recommendedName>
</protein>
<dbReference type="EMBL" id="AK023176">
    <property type="protein sequence ID" value="BAB14447.1"/>
    <property type="molecule type" value="mRNA"/>
</dbReference>
<dbReference type="EMBL" id="AC010789">
    <property type="status" value="NOT_ANNOTATED_CDS"/>
    <property type="molecule type" value="Genomic_DNA"/>
</dbReference>
<dbReference type="EMBL" id="AL391827">
    <property type="status" value="NOT_ANNOTATED_CDS"/>
    <property type="molecule type" value="Genomic_DNA"/>
</dbReference>
<dbReference type="EMBL" id="BC110511">
    <property type="status" value="NOT_ANNOTATED_CDS"/>
    <property type="molecule type" value="mRNA"/>
</dbReference>
<dbReference type="CCDS" id="CCDS41563.1">
    <molecule id="Q5T2E6-1"/>
</dbReference>
<dbReference type="RefSeq" id="NP_078817.2">
    <molecule id="Q5T2E6-1"/>
    <property type="nucleotide sequence ID" value="NM_024541.3"/>
</dbReference>
<dbReference type="RefSeq" id="XP_011538453.1">
    <molecule id="Q5T2E6-1"/>
    <property type="nucleotide sequence ID" value="XM_011540151.4"/>
</dbReference>
<dbReference type="RefSeq" id="XP_054222693.1">
    <molecule id="Q5T2E6-1"/>
    <property type="nucleotide sequence ID" value="XM_054366718.1"/>
</dbReference>
<dbReference type="BioGRID" id="122733">
    <property type="interactions" value="32"/>
</dbReference>
<dbReference type="FunCoup" id="Q5T2E6">
    <property type="interactions" value="2004"/>
</dbReference>
<dbReference type="IntAct" id="Q5T2E6">
    <property type="interactions" value="5"/>
</dbReference>
<dbReference type="STRING" id="9606.ENSP00000359050"/>
<dbReference type="GlyGen" id="Q5T2E6">
    <property type="glycosylation" value="1 site"/>
</dbReference>
<dbReference type="iPTMnet" id="Q5T2E6"/>
<dbReference type="PhosphoSitePlus" id="Q5T2E6"/>
<dbReference type="SwissPalm" id="Q5T2E6"/>
<dbReference type="BioMuta" id="C10orf76"/>
<dbReference type="DMDM" id="74744614"/>
<dbReference type="jPOST" id="Q5T2E6"/>
<dbReference type="MassIVE" id="Q5T2E6"/>
<dbReference type="PaxDb" id="9606-ENSP00000359050"/>
<dbReference type="PeptideAtlas" id="Q5T2E6"/>
<dbReference type="ProteomicsDB" id="64333">
    <molecule id="Q5T2E6-1"/>
</dbReference>
<dbReference type="ProteomicsDB" id="64334">
    <molecule id="Q5T2E6-2"/>
</dbReference>
<dbReference type="ProteomicsDB" id="64335">
    <molecule id="Q5T2E6-3"/>
</dbReference>
<dbReference type="Pumba" id="Q5T2E6"/>
<dbReference type="Antibodypedia" id="64513">
    <property type="antibodies" value="13 antibodies from 7 providers"/>
</dbReference>
<dbReference type="DNASU" id="79591"/>
<dbReference type="Ensembl" id="ENST00000370033.9">
    <molecule id="Q5T2E6-1"/>
    <property type="protein sequence ID" value="ENSP00000359050.4"/>
    <property type="gene ID" value="ENSG00000120029.13"/>
</dbReference>
<dbReference type="GeneID" id="79591"/>
<dbReference type="KEGG" id="hsa:79591"/>
<dbReference type="MANE-Select" id="ENST00000370033.9">
    <property type="protein sequence ID" value="ENSP00000359050.4"/>
    <property type="RefSeq nucleotide sequence ID" value="NM_024541.3"/>
    <property type="RefSeq protein sequence ID" value="NP_078817.2"/>
</dbReference>
<dbReference type="UCSC" id="uc009xwy.2">
    <molecule id="Q5T2E6-1"/>
    <property type="organism name" value="human"/>
</dbReference>
<dbReference type="AGR" id="HGNC:25788"/>
<dbReference type="CTD" id="79591"/>
<dbReference type="DisGeNET" id="79591"/>
<dbReference type="GeneCards" id="ARMH3"/>
<dbReference type="HGNC" id="HGNC:25788">
    <property type="gene designation" value="ARMH3"/>
</dbReference>
<dbReference type="HPA" id="ENSG00000120029">
    <property type="expression patterns" value="Low tissue specificity"/>
</dbReference>
<dbReference type="MIM" id="620867">
    <property type="type" value="gene"/>
</dbReference>
<dbReference type="neXtProt" id="NX_Q5T2E6"/>
<dbReference type="OpenTargets" id="ENSG00000120029"/>
<dbReference type="PharmGKB" id="PA134903060"/>
<dbReference type="VEuPathDB" id="HostDB:ENSG00000120029"/>
<dbReference type="eggNOG" id="KOG4654">
    <property type="taxonomic scope" value="Eukaryota"/>
</dbReference>
<dbReference type="GeneTree" id="ENSGT00390000002554"/>
<dbReference type="HOGENOM" id="CLU_029861_2_0_1"/>
<dbReference type="InParanoid" id="Q5T2E6"/>
<dbReference type="OMA" id="YEATHLN"/>
<dbReference type="OrthoDB" id="2012278at2759"/>
<dbReference type="PAN-GO" id="Q5T2E6">
    <property type="GO annotations" value="2 GO annotations based on evolutionary models"/>
</dbReference>
<dbReference type="PhylomeDB" id="Q5T2E6"/>
<dbReference type="TreeFam" id="TF300220"/>
<dbReference type="PathwayCommons" id="Q5T2E6"/>
<dbReference type="SignaLink" id="Q5T2E6"/>
<dbReference type="BioGRID-ORCS" id="79591">
    <property type="hits" value="54 hits in 1139 CRISPR screens"/>
</dbReference>
<dbReference type="ChiTaRS" id="ARMH3">
    <property type="organism name" value="human"/>
</dbReference>
<dbReference type="GenomeRNAi" id="79591"/>
<dbReference type="Pharos" id="Q5T2E6">
    <property type="development level" value="Tdark"/>
</dbReference>
<dbReference type="PRO" id="PR:Q5T2E6"/>
<dbReference type="Proteomes" id="UP000005640">
    <property type="component" value="Chromosome 10"/>
</dbReference>
<dbReference type="RNAct" id="Q5T2E6">
    <property type="molecule type" value="protein"/>
</dbReference>
<dbReference type="Bgee" id="ENSG00000120029">
    <property type="expression patterns" value="Expressed in left ventricle myocardium and 188 other cell types or tissues"/>
</dbReference>
<dbReference type="ExpressionAtlas" id="Q5T2E6">
    <property type="expression patterns" value="baseline and differential"/>
</dbReference>
<dbReference type="GO" id="GO:0005829">
    <property type="term" value="C:cytosol"/>
    <property type="evidence" value="ECO:0000314"/>
    <property type="project" value="UniProtKB"/>
</dbReference>
<dbReference type="GO" id="GO:0000139">
    <property type="term" value="C:Golgi membrane"/>
    <property type="evidence" value="ECO:0000314"/>
    <property type="project" value="UniProtKB"/>
</dbReference>
<dbReference type="GO" id="GO:1903358">
    <property type="term" value="P:regulation of Golgi organization"/>
    <property type="evidence" value="ECO:0000315"/>
    <property type="project" value="UniProtKB"/>
</dbReference>
<dbReference type="InterPro" id="IPR016024">
    <property type="entry name" value="ARM-type_fold"/>
</dbReference>
<dbReference type="InterPro" id="IPR039868">
    <property type="entry name" value="ARMD3-like"/>
</dbReference>
<dbReference type="InterPro" id="IPR013636">
    <property type="entry name" value="ARMH3_C"/>
</dbReference>
<dbReference type="PANTHER" id="PTHR13608">
    <property type="entry name" value="ARMADILLO-LIKE HELICAL DOMAIN-CONTAINING PROTEIN 3"/>
    <property type="match status" value="1"/>
</dbReference>
<dbReference type="PANTHER" id="PTHR13608:SF3">
    <property type="entry name" value="ARMADILLO-LIKE HELICAL DOMAIN-CONTAINING PROTEIN 3"/>
    <property type="match status" value="1"/>
</dbReference>
<dbReference type="Pfam" id="PF08427">
    <property type="entry name" value="ARMH3_C"/>
    <property type="match status" value="1"/>
</dbReference>
<dbReference type="SMART" id="SM01158">
    <property type="entry name" value="DUF1741"/>
    <property type="match status" value="1"/>
</dbReference>
<dbReference type="SUPFAM" id="SSF48371">
    <property type="entry name" value="ARM repeat"/>
    <property type="match status" value="1"/>
</dbReference>
<organism>
    <name type="scientific">Homo sapiens</name>
    <name type="common">Human</name>
    <dbReference type="NCBI Taxonomy" id="9606"/>
    <lineage>
        <taxon>Eukaryota</taxon>
        <taxon>Metazoa</taxon>
        <taxon>Chordata</taxon>
        <taxon>Craniata</taxon>
        <taxon>Vertebrata</taxon>
        <taxon>Euteleostomi</taxon>
        <taxon>Mammalia</taxon>
        <taxon>Eutheria</taxon>
        <taxon>Euarchontoglires</taxon>
        <taxon>Primates</taxon>
        <taxon>Haplorrhini</taxon>
        <taxon>Catarrhini</taxon>
        <taxon>Hominidae</taxon>
        <taxon>Homo</taxon>
    </lineage>
</organism>
<reference key="1">
    <citation type="journal article" date="2004" name="Nat. Genet.">
        <title>Complete sequencing and characterization of 21,243 full-length human cDNAs.</title>
        <authorList>
            <person name="Ota T."/>
            <person name="Suzuki Y."/>
            <person name="Nishikawa T."/>
            <person name="Otsuki T."/>
            <person name="Sugiyama T."/>
            <person name="Irie R."/>
            <person name="Wakamatsu A."/>
            <person name="Hayashi K."/>
            <person name="Sato H."/>
            <person name="Nagai K."/>
            <person name="Kimura K."/>
            <person name="Makita H."/>
            <person name="Sekine M."/>
            <person name="Obayashi M."/>
            <person name="Nishi T."/>
            <person name="Shibahara T."/>
            <person name="Tanaka T."/>
            <person name="Ishii S."/>
            <person name="Yamamoto J."/>
            <person name="Saito K."/>
            <person name="Kawai Y."/>
            <person name="Isono Y."/>
            <person name="Nakamura Y."/>
            <person name="Nagahari K."/>
            <person name="Murakami K."/>
            <person name="Yasuda T."/>
            <person name="Iwayanagi T."/>
            <person name="Wagatsuma M."/>
            <person name="Shiratori A."/>
            <person name="Sudo H."/>
            <person name="Hosoiri T."/>
            <person name="Kaku Y."/>
            <person name="Kodaira H."/>
            <person name="Kondo H."/>
            <person name="Sugawara M."/>
            <person name="Takahashi M."/>
            <person name="Kanda K."/>
            <person name="Yokoi T."/>
            <person name="Furuya T."/>
            <person name="Kikkawa E."/>
            <person name="Omura Y."/>
            <person name="Abe K."/>
            <person name="Kamihara K."/>
            <person name="Katsuta N."/>
            <person name="Sato K."/>
            <person name="Tanikawa M."/>
            <person name="Yamazaki M."/>
            <person name="Ninomiya K."/>
            <person name="Ishibashi T."/>
            <person name="Yamashita H."/>
            <person name="Murakawa K."/>
            <person name="Fujimori K."/>
            <person name="Tanai H."/>
            <person name="Kimata M."/>
            <person name="Watanabe M."/>
            <person name="Hiraoka S."/>
            <person name="Chiba Y."/>
            <person name="Ishida S."/>
            <person name="Ono Y."/>
            <person name="Takiguchi S."/>
            <person name="Watanabe S."/>
            <person name="Yosida M."/>
            <person name="Hotuta T."/>
            <person name="Kusano J."/>
            <person name="Kanehori K."/>
            <person name="Takahashi-Fujii A."/>
            <person name="Hara H."/>
            <person name="Tanase T.-O."/>
            <person name="Nomura Y."/>
            <person name="Togiya S."/>
            <person name="Komai F."/>
            <person name="Hara R."/>
            <person name="Takeuchi K."/>
            <person name="Arita M."/>
            <person name="Imose N."/>
            <person name="Musashino K."/>
            <person name="Yuuki H."/>
            <person name="Oshima A."/>
            <person name="Sasaki N."/>
            <person name="Aotsuka S."/>
            <person name="Yoshikawa Y."/>
            <person name="Matsunawa H."/>
            <person name="Ichihara T."/>
            <person name="Shiohata N."/>
            <person name="Sano S."/>
            <person name="Moriya S."/>
            <person name="Momiyama H."/>
            <person name="Satoh N."/>
            <person name="Takami S."/>
            <person name="Terashima Y."/>
            <person name="Suzuki O."/>
            <person name="Nakagawa S."/>
            <person name="Senoh A."/>
            <person name="Mizoguchi H."/>
            <person name="Goto Y."/>
            <person name="Shimizu F."/>
            <person name="Wakebe H."/>
            <person name="Hishigaki H."/>
            <person name="Watanabe T."/>
            <person name="Sugiyama A."/>
            <person name="Takemoto M."/>
            <person name="Kawakami B."/>
            <person name="Yamazaki M."/>
            <person name="Watanabe K."/>
            <person name="Kumagai A."/>
            <person name="Itakura S."/>
            <person name="Fukuzumi Y."/>
            <person name="Fujimori Y."/>
            <person name="Komiyama M."/>
            <person name="Tashiro H."/>
            <person name="Tanigami A."/>
            <person name="Fujiwara T."/>
            <person name="Ono T."/>
            <person name="Yamada K."/>
            <person name="Fujii Y."/>
            <person name="Ozaki K."/>
            <person name="Hirao M."/>
            <person name="Ohmori Y."/>
            <person name="Kawabata A."/>
            <person name="Hikiji T."/>
            <person name="Kobatake N."/>
            <person name="Inagaki H."/>
            <person name="Ikema Y."/>
            <person name="Okamoto S."/>
            <person name="Okitani R."/>
            <person name="Kawakami T."/>
            <person name="Noguchi S."/>
            <person name="Itoh T."/>
            <person name="Shigeta K."/>
            <person name="Senba T."/>
            <person name="Matsumura K."/>
            <person name="Nakajima Y."/>
            <person name="Mizuno T."/>
            <person name="Morinaga M."/>
            <person name="Sasaki M."/>
            <person name="Togashi T."/>
            <person name="Oyama M."/>
            <person name="Hata H."/>
            <person name="Watanabe M."/>
            <person name="Komatsu T."/>
            <person name="Mizushima-Sugano J."/>
            <person name="Satoh T."/>
            <person name="Shirai Y."/>
            <person name="Takahashi Y."/>
            <person name="Nakagawa K."/>
            <person name="Okumura K."/>
            <person name="Nagase T."/>
            <person name="Nomura N."/>
            <person name="Kikuchi H."/>
            <person name="Masuho Y."/>
            <person name="Yamashita R."/>
            <person name="Nakai K."/>
            <person name="Yada T."/>
            <person name="Nakamura Y."/>
            <person name="Ohara O."/>
            <person name="Isogai T."/>
            <person name="Sugano S."/>
        </authorList>
    </citation>
    <scope>NUCLEOTIDE SEQUENCE [LARGE SCALE MRNA] (ISOFORM 2)</scope>
</reference>
<reference key="2">
    <citation type="journal article" date="2004" name="Nature">
        <title>The DNA sequence and comparative analysis of human chromosome 10.</title>
        <authorList>
            <person name="Deloukas P."/>
            <person name="Earthrowl M.E."/>
            <person name="Grafham D.V."/>
            <person name="Rubenfield M."/>
            <person name="French L."/>
            <person name="Steward C.A."/>
            <person name="Sims S.K."/>
            <person name="Jones M.C."/>
            <person name="Searle S."/>
            <person name="Scott C."/>
            <person name="Howe K."/>
            <person name="Hunt S.E."/>
            <person name="Andrews T.D."/>
            <person name="Gilbert J.G.R."/>
            <person name="Swarbreck D."/>
            <person name="Ashurst J.L."/>
            <person name="Taylor A."/>
            <person name="Battles J."/>
            <person name="Bird C.P."/>
            <person name="Ainscough R."/>
            <person name="Almeida J.P."/>
            <person name="Ashwell R.I.S."/>
            <person name="Ambrose K.D."/>
            <person name="Babbage A.K."/>
            <person name="Bagguley C.L."/>
            <person name="Bailey J."/>
            <person name="Banerjee R."/>
            <person name="Bates K."/>
            <person name="Beasley H."/>
            <person name="Bray-Allen S."/>
            <person name="Brown A.J."/>
            <person name="Brown J.Y."/>
            <person name="Burford D.C."/>
            <person name="Burrill W."/>
            <person name="Burton J."/>
            <person name="Cahill P."/>
            <person name="Camire D."/>
            <person name="Carter N.P."/>
            <person name="Chapman J.C."/>
            <person name="Clark S.Y."/>
            <person name="Clarke G."/>
            <person name="Clee C.M."/>
            <person name="Clegg S."/>
            <person name="Corby N."/>
            <person name="Coulson A."/>
            <person name="Dhami P."/>
            <person name="Dutta I."/>
            <person name="Dunn M."/>
            <person name="Faulkner L."/>
            <person name="Frankish A."/>
            <person name="Frankland J.A."/>
            <person name="Garner P."/>
            <person name="Garnett J."/>
            <person name="Gribble S."/>
            <person name="Griffiths C."/>
            <person name="Grocock R."/>
            <person name="Gustafson E."/>
            <person name="Hammond S."/>
            <person name="Harley J.L."/>
            <person name="Hart E."/>
            <person name="Heath P.D."/>
            <person name="Ho T.P."/>
            <person name="Hopkins B."/>
            <person name="Horne J."/>
            <person name="Howden P.J."/>
            <person name="Huckle E."/>
            <person name="Hynds C."/>
            <person name="Johnson C."/>
            <person name="Johnson D."/>
            <person name="Kana A."/>
            <person name="Kay M."/>
            <person name="Kimberley A.M."/>
            <person name="Kershaw J.K."/>
            <person name="Kokkinaki M."/>
            <person name="Laird G.K."/>
            <person name="Lawlor S."/>
            <person name="Lee H.M."/>
            <person name="Leongamornlert D.A."/>
            <person name="Laird G."/>
            <person name="Lloyd C."/>
            <person name="Lloyd D.M."/>
            <person name="Loveland J."/>
            <person name="Lovell J."/>
            <person name="McLaren S."/>
            <person name="McLay K.E."/>
            <person name="McMurray A."/>
            <person name="Mashreghi-Mohammadi M."/>
            <person name="Matthews L."/>
            <person name="Milne S."/>
            <person name="Nickerson T."/>
            <person name="Nguyen M."/>
            <person name="Overton-Larty E."/>
            <person name="Palmer S.A."/>
            <person name="Pearce A.V."/>
            <person name="Peck A.I."/>
            <person name="Pelan S."/>
            <person name="Phillimore B."/>
            <person name="Porter K."/>
            <person name="Rice C.M."/>
            <person name="Rogosin A."/>
            <person name="Ross M.T."/>
            <person name="Sarafidou T."/>
            <person name="Sehra H.K."/>
            <person name="Shownkeen R."/>
            <person name="Skuce C.D."/>
            <person name="Smith M."/>
            <person name="Standring L."/>
            <person name="Sycamore N."/>
            <person name="Tester J."/>
            <person name="Thorpe A."/>
            <person name="Torcasso W."/>
            <person name="Tracey A."/>
            <person name="Tromans A."/>
            <person name="Tsolas J."/>
            <person name="Wall M."/>
            <person name="Walsh J."/>
            <person name="Wang H."/>
            <person name="Weinstock K."/>
            <person name="West A.P."/>
            <person name="Willey D.L."/>
            <person name="Whitehead S.L."/>
            <person name="Wilming L."/>
            <person name="Wray P.W."/>
            <person name="Young L."/>
            <person name="Chen Y."/>
            <person name="Lovering R.C."/>
            <person name="Moschonas N.K."/>
            <person name="Siebert R."/>
            <person name="Fechtel K."/>
            <person name="Bentley D."/>
            <person name="Durbin R.M."/>
            <person name="Hubbard T."/>
            <person name="Doucette-Stamm L."/>
            <person name="Beck S."/>
            <person name="Smith D.R."/>
            <person name="Rogers J."/>
        </authorList>
    </citation>
    <scope>NUCLEOTIDE SEQUENCE [LARGE SCALE GENOMIC DNA]</scope>
</reference>
<reference key="3">
    <citation type="journal article" date="2004" name="Genome Res.">
        <title>The status, quality, and expansion of the NIH full-length cDNA project: the Mammalian Gene Collection (MGC).</title>
        <authorList>
            <consortium name="The MGC Project Team"/>
        </authorList>
    </citation>
    <scope>NUCLEOTIDE SEQUENCE [LARGE SCALE MRNA] (ISOFORM 3)</scope>
</reference>
<reference key="4">
    <citation type="journal article" date="2013" name="MBio">
        <title>ACBD3 interaction with TBC1 domain 22 protein is differentially affected by enteroviral and kobuviral 3A protein binding.</title>
        <authorList>
            <person name="Greninger A.L."/>
            <person name="Knudsen G.M."/>
            <person name="Betegon M."/>
            <person name="Burlingame A.L."/>
            <person name="DeRisi J.L."/>
        </authorList>
    </citation>
    <scope>INTERACTION WITH PI4KB</scope>
</reference>
<reference key="5">
    <citation type="journal article" date="2019" name="Mol. Cell. Proteomics">
        <title>BioID performed on Golgi enriched fractions identify C10orf76 as aGBF1 Binding Protein essential for Golgi maintenance and secretion.</title>
        <authorList>
            <person name="Chan C.J."/>
            <person name="Le R."/>
            <person name="Burns K."/>
            <person name="Ahmed K."/>
            <person name="Coyaud E."/>
            <person name="Laurent E.M.N."/>
            <person name="Raught B."/>
            <person name="Melancon P."/>
        </authorList>
    </citation>
    <scope>SUBCELLULAR LOCATION</scope>
    <scope>INTERACTION WITH GBF1</scope>
    <scope>FUNCTION</scope>
    <scope>IDENTIFICATION BY MASS SPECTROMETRY</scope>
</reference>
<accession>Q5T2E6</accession>
<accession>Q2TB87</accession>
<accession>Q9H8Z9</accession>
<evidence type="ECO:0000255" key="1"/>
<evidence type="ECO:0000269" key="2">
    <source>
    </source>
</evidence>
<evidence type="ECO:0000269" key="3">
    <source>
    </source>
</evidence>
<evidence type="ECO:0000303" key="4">
    <source>
    </source>
</evidence>
<evidence type="ECO:0000303" key="5">
    <source>
    </source>
</evidence>
<evidence type="ECO:0000305" key="6"/>
<evidence type="ECO:0000312" key="7">
    <source>
        <dbReference type="HGNC" id="HGNC:25788"/>
    </source>
</evidence>
<proteinExistence type="evidence at protein level"/>
<feature type="chain" id="PRO_0000284515" description="Armadillo-like helical domain-containing protein 3">
    <location>
        <begin position="1"/>
        <end position="689"/>
    </location>
</feature>
<feature type="transmembrane region" description="Helical" evidence="1">
    <location>
        <begin position="520"/>
        <end position="538"/>
    </location>
</feature>
<feature type="splice variant" id="VSP_024552" description="In isoform 2 and isoform 3." evidence="4 5">
    <location>
        <begin position="1"/>
        <end position="424"/>
    </location>
</feature>
<feature type="splice variant" id="VSP_024553" description="In isoform 3." evidence="5">
    <original>VLRLSTNAGQWKEAAS</original>
    <variation>EPSSTTLTPKLSPTLL</variation>
    <location>
        <begin position="569"/>
        <end position="584"/>
    </location>
</feature>
<feature type="splice variant" id="VSP_024554" description="In isoform 3." evidence="5">
    <location>
        <begin position="585"/>
        <end position="689"/>
    </location>
</feature>
<feature type="sequence conflict" description="In Ref. 1; BAB14447." evidence="6" ref="1">
    <original>A</original>
    <variation>V</variation>
    <location>
        <position position="672"/>
    </location>
</feature>
<gene>
    <name evidence="7" type="primary">ARMH3</name>
    <name evidence="7" type="synonym">C10orf76</name>
</gene>